<accession>Q9KA93</accession>
<sequence>MDYGRQDEQPEQPQQPEQPQQEPSQEGKPSGIIEKIQQLGQTNVPEMEQSNIHCITVVGQIEGHMQLPPQNKTTKYEHIIPQLVAAEQNKKIEGLLIILNTVGGDVEAGLAIAEMVATMSKPTVTLVLGGGHSIGVPIAVAANYSFIAETATMTIHPVRLTGLVIGVPQTFEYLDKMQERVVSFVTKHSHISEEKFKELMFSKGNLTRDIGTNVIGTDAVTYGLIDEVGGIGKAMQKLTELIEKQQPPHPEGEMMQ</sequence>
<keyword id="KW-0963">Cytoplasm</keyword>
<keyword id="KW-0378">Hydrolase</keyword>
<keyword id="KW-0645">Protease</keyword>
<keyword id="KW-0653">Protein transport</keyword>
<keyword id="KW-1185">Reference proteome</keyword>
<keyword id="KW-0811">Translocation</keyword>
<keyword id="KW-0813">Transport</keyword>
<dbReference type="EMBL" id="BA000004">
    <property type="protein sequence ID" value="BAB06116.1"/>
    <property type="molecule type" value="Genomic_DNA"/>
</dbReference>
<dbReference type="PIR" id="E83949">
    <property type="entry name" value="E83949"/>
</dbReference>
<dbReference type="RefSeq" id="WP_010898550.1">
    <property type="nucleotide sequence ID" value="NC_002570.2"/>
</dbReference>
<dbReference type="SMR" id="Q9KA93"/>
<dbReference type="STRING" id="272558.gene:10728295"/>
<dbReference type="MEROPS" id="S14.012"/>
<dbReference type="DNASU" id="892344"/>
<dbReference type="KEGG" id="bha:BH2397"/>
<dbReference type="eggNOG" id="COG0740">
    <property type="taxonomic scope" value="Bacteria"/>
</dbReference>
<dbReference type="HOGENOM" id="CLU_066827_1_0_9"/>
<dbReference type="OrthoDB" id="1705851at2"/>
<dbReference type="Proteomes" id="UP000001258">
    <property type="component" value="Chromosome"/>
</dbReference>
<dbReference type="GO" id="GO:0005737">
    <property type="term" value="C:cytoplasm"/>
    <property type="evidence" value="ECO:0007669"/>
    <property type="project" value="UniProtKB-SubCell"/>
</dbReference>
<dbReference type="GO" id="GO:0008233">
    <property type="term" value="F:peptidase activity"/>
    <property type="evidence" value="ECO:0007669"/>
    <property type="project" value="UniProtKB-KW"/>
</dbReference>
<dbReference type="GO" id="GO:0015031">
    <property type="term" value="P:protein transport"/>
    <property type="evidence" value="ECO:0007669"/>
    <property type="project" value="UniProtKB-KW"/>
</dbReference>
<dbReference type="GO" id="GO:0006508">
    <property type="term" value="P:proteolysis"/>
    <property type="evidence" value="ECO:0007669"/>
    <property type="project" value="UniProtKB-KW"/>
</dbReference>
<dbReference type="Gene3D" id="3.90.226.10">
    <property type="entry name" value="2-enoyl-CoA Hydratase, Chain A, domain 1"/>
    <property type="match status" value="1"/>
</dbReference>
<dbReference type="InterPro" id="IPR029045">
    <property type="entry name" value="ClpP/crotonase-like_dom_sf"/>
</dbReference>
<dbReference type="InterPro" id="IPR023562">
    <property type="entry name" value="ClpP/TepA"/>
</dbReference>
<dbReference type="Pfam" id="PF00574">
    <property type="entry name" value="CLP_protease"/>
    <property type="match status" value="1"/>
</dbReference>
<dbReference type="SUPFAM" id="SSF52096">
    <property type="entry name" value="ClpP/crotonase"/>
    <property type="match status" value="1"/>
</dbReference>
<name>TEPA_HALH5</name>
<proteinExistence type="inferred from homology"/>
<organism>
    <name type="scientific">Halalkalibacterium halodurans (strain ATCC BAA-125 / DSM 18197 / FERM 7344 / JCM 9153 / C-125)</name>
    <name type="common">Bacillus halodurans</name>
    <dbReference type="NCBI Taxonomy" id="272558"/>
    <lineage>
        <taxon>Bacteria</taxon>
        <taxon>Bacillati</taxon>
        <taxon>Bacillota</taxon>
        <taxon>Bacilli</taxon>
        <taxon>Bacillales</taxon>
        <taxon>Bacillaceae</taxon>
        <taxon>Halalkalibacterium (ex Joshi et al. 2022)</taxon>
    </lineage>
</organism>
<comment type="function">
    <text evidence="1">This activity is required for efficient translocation of pre-proteins across the membrane.</text>
</comment>
<comment type="subcellular location">
    <subcellularLocation>
        <location evidence="3">Cytoplasm</location>
    </subcellularLocation>
</comment>
<comment type="similarity">
    <text evidence="3">Belongs to the peptidase S14 family. TepA subfamily.</text>
</comment>
<reference key="1">
    <citation type="journal article" date="2000" name="Nucleic Acids Res.">
        <title>Complete genome sequence of the alkaliphilic bacterium Bacillus halodurans and genomic sequence comparison with Bacillus subtilis.</title>
        <authorList>
            <person name="Takami H."/>
            <person name="Nakasone K."/>
            <person name="Takaki Y."/>
            <person name="Maeno G."/>
            <person name="Sasaki R."/>
            <person name="Masui N."/>
            <person name="Fuji F."/>
            <person name="Hirama C."/>
            <person name="Nakamura Y."/>
            <person name="Ogasawara N."/>
            <person name="Kuhara S."/>
            <person name="Horikoshi K."/>
        </authorList>
    </citation>
    <scope>NUCLEOTIDE SEQUENCE [LARGE SCALE GENOMIC DNA]</scope>
    <source>
        <strain>ATCC BAA-125 / DSM 18197 / FERM 7344 / JCM 9153 / C-125</strain>
    </source>
</reference>
<protein>
    <recommendedName>
        <fullName>Translocation-enhancing protein TepA</fullName>
    </recommendedName>
</protein>
<evidence type="ECO:0000250" key="1"/>
<evidence type="ECO:0000256" key="2">
    <source>
        <dbReference type="SAM" id="MobiDB-lite"/>
    </source>
</evidence>
<evidence type="ECO:0000305" key="3"/>
<feature type="chain" id="PRO_0000179763" description="Translocation-enhancing protein TepA">
    <location>
        <begin position="1"/>
        <end position="256"/>
    </location>
</feature>
<feature type="region of interest" description="Disordered" evidence="2">
    <location>
        <begin position="1"/>
        <end position="29"/>
    </location>
</feature>
<feature type="compositionally biased region" description="Low complexity" evidence="2">
    <location>
        <begin position="11"/>
        <end position="26"/>
    </location>
</feature>
<feature type="active site" description="Nucleophile" evidence="1">
    <location>
        <position position="133"/>
    </location>
</feature>
<feature type="active site" evidence="1">
    <location>
        <position position="156"/>
    </location>
</feature>
<gene>
    <name type="primary">tepA</name>
    <name type="ordered locus">BH2397</name>
</gene>